<reference key="1">
    <citation type="journal article" date="2002" name="Nature">
        <title>Sequence and analysis of chromosome 2 of Dictyostelium discoideum.</title>
        <authorList>
            <person name="Gloeckner G."/>
            <person name="Eichinger L."/>
            <person name="Szafranski K."/>
            <person name="Pachebat J.A."/>
            <person name="Bankier A.T."/>
            <person name="Dear P.H."/>
            <person name="Lehmann R."/>
            <person name="Baumgart C."/>
            <person name="Parra G."/>
            <person name="Abril J.F."/>
            <person name="Guigo R."/>
            <person name="Kumpf K."/>
            <person name="Tunggal B."/>
            <person name="Cox E.C."/>
            <person name="Quail M.A."/>
            <person name="Platzer M."/>
            <person name="Rosenthal A."/>
            <person name="Noegel A.A."/>
        </authorList>
    </citation>
    <scope>NUCLEOTIDE SEQUENCE [LARGE SCALE GENOMIC DNA]</scope>
    <source>
        <strain>AX4</strain>
    </source>
</reference>
<reference key="2">
    <citation type="journal article" date="2005" name="Nature">
        <title>The genome of the social amoeba Dictyostelium discoideum.</title>
        <authorList>
            <person name="Eichinger L."/>
            <person name="Pachebat J.A."/>
            <person name="Gloeckner G."/>
            <person name="Rajandream M.A."/>
            <person name="Sucgang R."/>
            <person name="Berriman M."/>
            <person name="Song J."/>
            <person name="Olsen R."/>
            <person name="Szafranski K."/>
            <person name="Xu Q."/>
            <person name="Tunggal B."/>
            <person name="Kummerfeld S."/>
            <person name="Madera M."/>
            <person name="Konfortov B.A."/>
            <person name="Rivero F."/>
            <person name="Bankier A.T."/>
            <person name="Lehmann R."/>
            <person name="Hamlin N."/>
            <person name="Davies R."/>
            <person name="Gaudet P."/>
            <person name="Fey P."/>
            <person name="Pilcher K."/>
            <person name="Chen G."/>
            <person name="Saunders D."/>
            <person name="Sodergren E.J."/>
            <person name="Davis P."/>
            <person name="Kerhornou A."/>
            <person name="Nie X."/>
            <person name="Hall N."/>
            <person name="Anjard C."/>
            <person name="Hemphill L."/>
            <person name="Bason N."/>
            <person name="Farbrother P."/>
            <person name="Desany B."/>
            <person name="Just E."/>
            <person name="Morio T."/>
            <person name="Rost R."/>
            <person name="Churcher C.M."/>
            <person name="Cooper J."/>
            <person name="Haydock S."/>
            <person name="van Driessche N."/>
            <person name="Cronin A."/>
            <person name="Goodhead I."/>
            <person name="Muzny D.M."/>
            <person name="Mourier T."/>
            <person name="Pain A."/>
            <person name="Lu M."/>
            <person name="Harper D."/>
            <person name="Lindsay R."/>
            <person name="Hauser H."/>
            <person name="James K.D."/>
            <person name="Quiles M."/>
            <person name="Madan Babu M."/>
            <person name="Saito T."/>
            <person name="Buchrieser C."/>
            <person name="Wardroper A."/>
            <person name="Felder M."/>
            <person name="Thangavelu M."/>
            <person name="Johnson D."/>
            <person name="Knights A."/>
            <person name="Loulseged H."/>
            <person name="Mungall K.L."/>
            <person name="Oliver K."/>
            <person name="Price C."/>
            <person name="Quail M.A."/>
            <person name="Urushihara H."/>
            <person name="Hernandez J."/>
            <person name="Rabbinowitsch E."/>
            <person name="Steffen D."/>
            <person name="Sanders M."/>
            <person name="Ma J."/>
            <person name="Kohara Y."/>
            <person name="Sharp S."/>
            <person name="Simmonds M.N."/>
            <person name="Spiegler S."/>
            <person name="Tivey A."/>
            <person name="Sugano S."/>
            <person name="White B."/>
            <person name="Walker D."/>
            <person name="Woodward J.R."/>
            <person name="Winckler T."/>
            <person name="Tanaka Y."/>
            <person name="Shaulsky G."/>
            <person name="Schleicher M."/>
            <person name="Weinstock G.M."/>
            <person name="Rosenthal A."/>
            <person name="Cox E.C."/>
            <person name="Chisholm R.L."/>
            <person name="Gibbs R.A."/>
            <person name="Loomis W.F."/>
            <person name="Platzer M."/>
            <person name="Kay R.R."/>
            <person name="Williams J.G."/>
            <person name="Dear P.H."/>
            <person name="Noegel A.A."/>
            <person name="Barrell B.G."/>
            <person name="Kuspa A."/>
        </authorList>
    </citation>
    <scope>NUCLEOTIDE SEQUENCE [LARGE SCALE GENOMIC DNA]</scope>
    <source>
        <strain>AX4</strain>
    </source>
</reference>
<accession>Q55AW9</accession>
<accession>Q86AE0</accession>
<feature type="chain" id="PRO_0000328520" description="Phosphatidylinositol-3-phosphatase SAC1">
    <location>
        <begin position="1"/>
        <end position="581"/>
    </location>
</feature>
<feature type="topological domain" description="Cytoplasmic" evidence="1">
    <location>
        <begin position="1"/>
        <end position="511"/>
    </location>
</feature>
<feature type="transmembrane region" description="Helical" evidence="2">
    <location>
        <begin position="512"/>
        <end position="532"/>
    </location>
</feature>
<feature type="topological domain" description="Lumenal" evidence="1">
    <location>
        <begin position="533"/>
        <end position="535"/>
    </location>
</feature>
<feature type="transmembrane region" description="Helical" evidence="2">
    <location>
        <begin position="536"/>
        <end position="556"/>
    </location>
</feature>
<feature type="topological domain" description="Cytoplasmic" evidence="1">
    <location>
        <begin position="557"/>
        <end position="581"/>
    </location>
</feature>
<feature type="domain" description="SAC" evidence="3">
    <location>
        <begin position="119"/>
        <end position="445"/>
    </location>
</feature>
<sequence>MNIELINTNERFILINNGNKDKSLNIDKHSVKASISVGVPKNNEKVLTRIENVKGIIGCIQLVSGHYLMIFKEHNHVATVTGKKIYQMKDVELIPFFPNQQSLVSIPDQDAEEQHLSMIRWLLSSENFYFSYDYDFTLTLQRQYSTTTTTTSGSSLGERCDSRFFWNEKYVTILSKEHGLGDWILPITMGFVESKTLGGTCQFTLISRRNLNRSGTRYNVRGIDKKGNVANNVETEQIIEIKENTFTSFVQVRGSIPLLWSQFPTLKYKPSVKFYGDEKENSQALEQHFKQLHQLYGSTTVVNLIDRKGAELKLGEAYEERVKSLKDVHYVWFDFHSICKGMRYDKLSILMDQLKDDLKQYGFFFVEDGKIVQKQQGVFRTNCIDNLDRTNVVQSLITRHSLENQMASVLNKQIPSTTFKGDQFEYVFKNIWADHGDAISTQYSGTGALKNDFTRTGKRNFQGVLRDGENSVKRYYLNNFKDGFRQDSYFLFTNPSVDLTTAKQHESKPPSPLIWIFSFVFAAIFLANLYLPSATSSIGGFISQTTVLVGSVFFALKLAMKYQASIVDKPTLFKLDSIYKN</sequence>
<dbReference type="EC" id="3.1.3.64" evidence="1"/>
<dbReference type="EMBL" id="AAFI02000006">
    <property type="protein sequence ID" value="EAL71679.1"/>
    <property type="molecule type" value="Genomic_DNA"/>
</dbReference>
<dbReference type="RefSeq" id="XP_645577.1">
    <property type="nucleotide sequence ID" value="XM_640485.1"/>
</dbReference>
<dbReference type="SMR" id="Q55AW9"/>
<dbReference type="FunCoup" id="Q55AW9">
    <property type="interactions" value="1322"/>
</dbReference>
<dbReference type="STRING" id="44689.Q55AW9"/>
<dbReference type="PaxDb" id="44689-DDB0233948"/>
<dbReference type="EnsemblProtists" id="EAL71679">
    <property type="protein sequence ID" value="EAL71679"/>
    <property type="gene ID" value="DDB_G0271630"/>
</dbReference>
<dbReference type="GeneID" id="8618030"/>
<dbReference type="KEGG" id="ddi:DDB_G0271630"/>
<dbReference type="dictyBase" id="DDB_G0271630">
    <property type="gene designation" value="sac1"/>
</dbReference>
<dbReference type="VEuPathDB" id="AmoebaDB:DDB_G0271630"/>
<dbReference type="eggNOG" id="KOG1889">
    <property type="taxonomic scope" value="Eukaryota"/>
</dbReference>
<dbReference type="HOGENOM" id="CLU_003016_7_4_1"/>
<dbReference type="InParanoid" id="Q55AW9"/>
<dbReference type="OMA" id="QHFITSI"/>
<dbReference type="PhylomeDB" id="Q55AW9"/>
<dbReference type="Reactome" id="R-DDI-1483248">
    <property type="pathway name" value="Synthesis of PIPs at the ER membrane"/>
</dbReference>
<dbReference type="Reactome" id="R-DDI-1660514">
    <property type="pathway name" value="Synthesis of PIPs at the Golgi membrane"/>
</dbReference>
<dbReference type="Reactome" id="R-DDI-1660516">
    <property type="pathway name" value="Synthesis of PIPs at the early endosome membrane"/>
</dbReference>
<dbReference type="PRO" id="PR:Q55AW9"/>
<dbReference type="Proteomes" id="UP000002195">
    <property type="component" value="Chromosome 2"/>
</dbReference>
<dbReference type="GO" id="GO:0005783">
    <property type="term" value="C:endoplasmic reticulum"/>
    <property type="evidence" value="ECO:0000318"/>
    <property type="project" value="GO_Central"/>
</dbReference>
<dbReference type="GO" id="GO:0005789">
    <property type="term" value="C:endoplasmic reticulum membrane"/>
    <property type="evidence" value="ECO:0007669"/>
    <property type="project" value="UniProtKB-SubCell"/>
</dbReference>
<dbReference type="GO" id="GO:0000139">
    <property type="term" value="C:Golgi membrane"/>
    <property type="evidence" value="ECO:0007669"/>
    <property type="project" value="UniProtKB-SubCell"/>
</dbReference>
<dbReference type="GO" id="GO:0140220">
    <property type="term" value="C:pathogen-containing vacuole"/>
    <property type="evidence" value="ECO:0007005"/>
    <property type="project" value="dictyBase"/>
</dbReference>
<dbReference type="GO" id="GO:0004438">
    <property type="term" value="F:phosphatidylinositol-3-phosphate phosphatase activity"/>
    <property type="evidence" value="ECO:0000250"/>
    <property type="project" value="dictyBase"/>
</dbReference>
<dbReference type="GO" id="GO:0043812">
    <property type="term" value="F:phosphatidylinositol-4-phosphate phosphatase activity"/>
    <property type="evidence" value="ECO:0000250"/>
    <property type="project" value="dictyBase"/>
</dbReference>
<dbReference type="GO" id="GO:0046856">
    <property type="term" value="P:phosphatidylinositol dephosphorylation"/>
    <property type="evidence" value="ECO:0000318"/>
    <property type="project" value="GO_Central"/>
</dbReference>
<dbReference type="GO" id="GO:0140459">
    <property type="term" value="P:response to Gram-positive bacterium"/>
    <property type="evidence" value="ECO:0000314"/>
    <property type="project" value="dictyBase"/>
</dbReference>
<dbReference type="InterPro" id="IPR002013">
    <property type="entry name" value="SAC_dom"/>
</dbReference>
<dbReference type="PANTHER" id="PTHR45662">
    <property type="entry name" value="PHOSPHATIDYLINOSITIDE PHOSPHATASE SAC1"/>
    <property type="match status" value="1"/>
</dbReference>
<dbReference type="PANTHER" id="PTHR45662:SF2">
    <property type="entry name" value="PHOSPHATIDYLINOSITOL-3-PHOSPHATASE SAC1"/>
    <property type="match status" value="1"/>
</dbReference>
<dbReference type="Pfam" id="PF02383">
    <property type="entry name" value="Syja_N"/>
    <property type="match status" value="1"/>
</dbReference>
<dbReference type="PROSITE" id="PS50275">
    <property type="entry name" value="SAC"/>
    <property type="match status" value="1"/>
</dbReference>
<name>SAC1_DICDI</name>
<evidence type="ECO:0000250" key="1">
    <source>
        <dbReference type="UniProtKB" id="P32368"/>
    </source>
</evidence>
<evidence type="ECO:0000255" key="2"/>
<evidence type="ECO:0000255" key="3">
    <source>
        <dbReference type="PROSITE-ProRule" id="PRU00183"/>
    </source>
</evidence>
<organism>
    <name type="scientific">Dictyostelium discoideum</name>
    <name type="common">Social amoeba</name>
    <dbReference type="NCBI Taxonomy" id="44689"/>
    <lineage>
        <taxon>Eukaryota</taxon>
        <taxon>Amoebozoa</taxon>
        <taxon>Evosea</taxon>
        <taxon>Eumycetozoa</taxon>
        <taxon>Dictyostelia</taxon>
        <taxon>Dictyosteliales</taxon>
        <taxon>Dictyosteliaceae</taxon>
        <taxon>Dictyostelium</taxon>
    </lineage>
</organism>
<comment type="function">
    <text evidence="1">Phosphoinositide phosphatase which catalyzes the hydrolysis of phosphatidylinositol 3-phosphate (PtdIns(3)P) and phosphatidylinositol 4-phosphate (PtdIns(4)P) (By similarity). Has low activity towards phosphatidylinositol-3,5-bisphosphate (PtdIns(3,5)P2) (By similarity).</text>
</comment>
<comment type="catalytic activity">
    <reaction evidence="1">
        <text>a 1,2-diacyl-sn-glycero-3-phospho-(1D-myo-inositol-3-phosphate) + H2O = a 1,2-diacyl-sn-glycero-3-phospho-(1D-myo-inositol) + phosphate</text>
        <dbReference type="Rhea" id="RHEA:12316"/>
        <dbReference type="ChEBI" id="CHEBI:15377"/>
        <dbReference type="ChEBI" id="CHEBI:43474"/>
        <dbReference type="ChEBI" id="CHEBI:57880"/>
        <dbReference type="ChEBI" id="CHEBI:58088"/>
        <dbReference type="EC" id="3.1.3.64"/>
    </reaction>
    <physiologicalReaction direction="left-to-right" evidence="1">
        <dbReference type="Rhea" id="RHEA:12317"/>
    </physiologicalReaction>
</comment>
<comment type="catalytic activity">
    <reaction evidence="1">
        <text>a 1,2-diacyl-sn-glycero-3-phospho-(1D-myo-inositol 4-phosphate) + H2O = a 1,2-diacyl-sn-glycero-3-phospho-(1D-myo-inositol) + phosphate</text>
        <dbReference type="Rhea" id="RHEA:55652"/>
        <dbReference type="ChEBI" id="CHEBI:15377"/>
        <dbReference type="ChEBI" id="CHEBI:43474"/>
        <dbReference type="ChEBI" id="CHEBI:57880"/>
        <dbReference type="ChEBI" id="CHEBI:58178"/>
    </reaction>
    <physiologicalReaction direction="left-to-right" evidence="1">
        <dbReference type="Rhea" id="RHEA:55653"/>
    </physiologicalReaction>
</comment>
<comment type="subcellular location">
    <subcellularLocation>
        <location evidence="1">Endoplasmic reticulum membrane</location>
        <topology evidence="2">Multi-pass membrane protein</topology>
    </subcellularLocation>
    <subcellularLocation>
        <location evidence="1">Golgi apparatus membrane</location>
        <topology evidence="2">Multi-pass membrane protein</topology>
    </subcellularLocation>
</comment>
<protein>
    <recommendedName>
        <fullName>Phosphatidylinositol-3-phosphatase SAC1</fullName>
        <ecNumber evidence="1">3.1.3.64</ecNumber>
    </recommendedName>
    <alternativeName>
        <fullName evidence="1">Phosphatidylinositol-4-phosphate phosphatase</fullName>
    </alternativeName>
</protein>
<gene>
    <name type="primary">sac1</name>
    <name type="ORF">DDB_G0271630</name>
</gene>
<keyword id="KW-0256">Endoplasmic reticulum</keyword>
<keyword id="KW-0333">Golgi apparatus</keyword>
<keyword id="KW-0378">Hydrolase</keyword>
<keyword id="KW-0472">Membrane</keyword>
<keyword id="KW-1185">Reference proteome</keyword>
<keyword id="KW-0812">Transmembrane</keyword>
<keyword id="KW-1133">Transmembrane helix</keyword>
<proteinExistence type="inferred from homology"/>